<feature type="chain" id="PRO_0000212333" description="Protein arginine N-methyltransferase 6">
    <location>
        <begin position="1"/>
        <end position="378"/>
    </location>
</feature>
<feature type="domain" description="SAM-dependent MTase PRMT-type" evidence="3">
    <location>
        <begin position="47"/>
        <end position="377"/>
    </location>
</feature>
<feature type="region of interest" description="Disordered" evidence="4">
    <location>
        <begin position="1"/>
        <end position="46"/>
    </location>
</feature>
<feature type="compositionally biased region" description="Gly residues" evidence="4">
    <location>
        <begin position="13"/>
        <end position="22"/>
    </location>
</feature>
<feature type="active site" evidence="1">
    <location>
        <position position="158"/>
    </location>
</feature>
<feature type="active site" evidence="1">
    <location>
        <position position="167"/>
    </location>
</feature>
<feature type="binding site" evidence="1">
    <location>
        <position position="60"/>
    </location>
    <ligand>
        <name>S-adenosyl-L-methionine</name>
        <dbReference type="ChEBI" id="CHEBI:59789"/>
    </ligand>
</feature>
<feature type="binding site" evidence="1">
    <location>
        <position position="69"/>
    </location>
    <ligand>
        <name>S-adenosyl-L-methionine</name>
        <dbReference type="ChEBI" id="CHEBI:59789"/>
    </ligand>
</feature>
<feature type="binding site" evidence="1">
    <location>
        <position position="93"/>
    </location>
    <ligand>
        <name>S-adenosyl-L-methionine</name>
        <dbReference type="ChEBI" id="CHEBI:59789"/>
    </ligand>
</feature>
<feature type="binding site" evidence="1">
    <location>
        <position position="115"/>
    </location>
    <ligand>
        <name>S-adenosyl-L-methionine</name>
        <dbReference type="ChEBI" id="CHEBI:59789"/>
    </ligand>
</feature>
<feature type="binding site" evidence="1">
    <location>
        <position position="144"/>
    </location>
    <ligand>
        <name>S-adenosyl-L-methionine</name>
        <dbReference type="ChEBI" id="CHEBI:59789"/>
    </ligand>
</feature>
<feature type="modified residue" description="Asymmetric dimethylarginine; by autocatalysis" evidence="1">
    <location>
        <position position="38"/>
    </location>
</feature>
<feature type="sequence conflict" description="In Ref. 1; BAC28811." evidence="8" ref="1">
    <original>M</original>
    <variation>W</variation>
    <location>
        <position position="1"/>
    </location>
</feature>
<feature type="sequence conflict" description="In Ref. 1; BAC28811." evidence="8" ref="1">
    <original>E</original>
    <variation>D</variation>
    <location>
        <position position="167"/>
    </location>
</feature>
<feature type="sequence conflict" description="In Ref. 2; AAH66221." evidence="8" ref="2">
    <original>F</original>
    <variation>L</variation>
    <location>
        <position position="315"/>
    </location>
</feature>
<feature type="helix" evidence="10">
    <location>
        <begin position="43"/>
        <end position="53"/>
    </location>
</feature>
<feature type="helix" evidence="9">
    <location>
        <begin position="54"/>
        <end position="65"/>
    </location>
</feature>
<feature type="helix" evidence="9">
    <location>
        <begin position="67"/>
        <end position="79"/>
    </location>
</feature>
<feature type="helix" evidence="9">
    <location>
        <begin position="81"/>
        <end position="84"/>
    </location>
</feature>
<feature type="strand" evidence="9">
    <location>
        <begin position="88"/>
        <end position="93"/>
    </location>
</feature>
<feature type="helix" evidence="9">
    <location>
        <begin position="98"/>
        <end position="105"/>
    </location>
</feature>
<feature type="strand" evidence="9">
    <location>
        <begin position="109"/>
        <end position="115"/>
    </location>
</feature>
<feature type="helix" evidence="9">
    <location>
        <begin position="120"/>
        <end position="129"/>
    </location>
</feature>
<feature type="turn" evidence="9">
    <location>
        <begin position="133"/>
        <end position="135"/>
    </location>
</feature>
<feature type="strand" evidence="9">
    <location>
        <begin position="136"/>
        <end position="141"/>
    </location>
</feature>
<feature type="turn" evidence="9">
    <location>
        <begin position="143"/>
        <end position="145"/>
    </location>
</feature>
<feature type="strand" evidence="9">
    <location>
        <begin position="152"/>
        <end position="156"/>
    </location>
</feature>
<feature type="turn" evidence="9">
    <location>
        <begin position="165"/>
        <end position="167"/>
    </location>
</feature>
<feature type="helix" evidence="9">
    <location>
        <begin position="170"/>
        <end position="180"/>
    </location>
</feature>
<feature type="strand" evidence="9">
    <location>
        <begin position="181"/>
        <end position="189"/>
    </location>
</feature>
<feature type="strand" evidence="9">
    <location>
        <begin position="191"/>
        <end position="199"/>
    </location>
</feature>
<feature type="helix" evidence="9">
    <location>
        <begin position="202"/>
        <end position="218"/>
    </location>
</feature>
<feature type="helix" evidence="9">
    <location>
        <begin position="225"/>
        <end position="234"/>
    </location>
</feature>
<feature type="strand" evidence="9">
    <location>
        <begin position="240"/>
        <end position="242"/>
    </location>
</feature>
<feature type="helix" evidence="9">
    <location>
        <begin position="246"/>
        <end position="248"/>
    </location>
</feature>
<feature type="strand" evidence="9">
    <location>
        <begin position="254"/>
        <end position="260"/>
    </location>
</feature>
<feature type="helix" evidence="9">
    <location>
        <begin position="266"/>
        <end position="272"/>
    </location>
</feature>
<feature type="strand" evidence="9">
    <location>
        <begin position="274"/>
        <end position="281"/>
    </location>
</feature>
<feature type="strand" evidence="9">
    <location>
        <begin position="284"/>
        <end position="299"/>
    </location>
</feature>
<feature type="helix" evidence="10">
    <location>
        <begin position="302"/>
        <end position="304"/>
    </location>
</feature>
<feature type="strand" evidence="9">
    <location>
        <begin position="308"/>
        <end position="311"/>
    </location>
</feature>
<feature type="strand" evidence="9">
    <location>
        <begin position="323"/>
        <end position="334"/>
    </location>
</feature>
<feature type="strand" evidence="9">
    <location>
        <begin position="339"/>
        <end position="349"/>
    </location>
</feature>
<feature type="strand" evidence="9">
    <location>
        <begin position="352"/>
        <end position="364"/>
    </location>
</feature>
<feature type="strand" evidence="9">
    <location>
        <begin position="370"/>
        <end position="375"/>
    </location>
</feature>
<accession>Q6NZB1</accession>
<accession>Q3TA42</accession>
<accession>Q8BN52</accession>
<accession>Q8BSC2</accession>
<accession>Q8R5D7</accession>
<gene>
    <name type="primary">Prmt6</name>
    <name type="synonym">Hrmt1l6</name>
</gene>
<protein>
    <recommendedName>
        <fullName>Protein arginine N-methyltransferase 6</fullName>
        <ecNumber evidence="7">2.1.1.319</ecNumber>
    </recommendedName>
    <alternativeName>
        <fullName>Histone-arginine N-methyltransferase PRMT6</fullName>
    </alternativeName>
</protein>
<dbReference type="EC" id="2.1.1.319" evidence="7"/>
<dbReference type="EMBL" id="AK034732">
    <property type="protein sequence ID" value="BAC28811.1"/>
    <property type="status" value="ALT_INIT"/>
    <property type="molecule type" value="mRNA"/>
</dbReference>
<dbReference type="EMBL" id="AK087551">
    <property type="protein sequence ID" value="BAC39923.1"/>
    <property type="status" value="ALT_INIT"/>
    <property type="molecule type" value="mRNA"/>
</dbReference>
<dbReference type="EMBL" id="AK172003">
    <property type="protein sequence ID" value="BAE42769.1"/>
    <property type="molecule type" value="mRNA"/>
</dbReference>
<dbReference type="EMBL" id="AK172105">
    <property type="protein sequence ID" value="BAE42828.1"/>
    <property type="molecule type" value="mRNA"/>
</dbReference>
<dbReference type="EMBL" id="AK172722">
    <property type="protein sequence ID" value="BAE43144.1"/>
    <property type="molecule type" value="mRNA"/>
</dbReference>
<dbReference type="EMBL" id="BC022899">
    <property type="protein sequence ID" value="AAH22899.1"/>
    <property type="molecule type" value="mRNA"/>
</dbReference>
<dbReference type="EMBL" id="BC066221">
    <property type="protein sequence ID" value="AAH66221.1"/>
    <property type="molecule type" value="mRNA"/>
</dbReference>
<dbReference type="CCDS" id="CCDS38605.1"/>
<dbReference type="RefSeq" id="NP_849222.3">
    <property type="nucleotide sequence ID" value="NM_178891.5"/>
</dbReference>
<dbReference type="PDB" id="4C03">
    <property type="method" value="X-ray"/>
    <property type="resolution" value="1.58 A"/>
    <property type="chains" value="A/B=1-378"/>
</dbReference>
<dbReference type="PDB" id="4C04">
    <property type="method" value="X-ray"/>
    <property type="resolution" value="1.58 A"/>
    <property type="chains" value="A=1-378"/>
</dbReference>
<dbReference type="PDB" id="4C05">
    <property type="method" value="X-ray"/>
    <property type="resolution" value="2.20 A"/>
    <property type="chains" value="A=1-378"/>
</dbReference>
<dbReference type="PDB" id="4C06">
    <property type="method" value="X-ray"/>
    <property type="resolution" value="1.60 A"/>
    <property type="chains" value="A=1-378"/>
</dbReference>
<dbReference type="PDB" id="4C07">
    <property type="method" value="X-ray"/>
    <property type="resolution" value="1.50 A"/>
    <property type="chains" value="A=1-378"/>
</dbReference>
<dbReference type="PDB" id="4C08">
    <property type="method" value="X-ray"/>
    <property type="resolution" value="1.34 A"/>
    <property type="chains" value="A=1-378"/>
</dbReference>
<dbReference type="PDB" id="5FQN">
    <property type="method" value="X-ray"/>
    <property type="resolution" value="1.66 A"/>
    <property type="chains" value="A=1-378"/>
</dbReference>
<dbReference type="PDB" id="5FQO">
    <property type="method" value="X-ray"/>
    <property type="resolution" value="1.90 A"/>
    <property type="chains" value="A=1-378"/>
</dbReference>
<dbReference type="PDB" id="5LV4">
    <property type="method" value="X-ray"/>
    <property type="resolution" value="1.66 A"/>
    <property type="chains" value="A=1-378"/>
</dbReference>
<dbReference type="PDB" id="5LV5">
    <property type="method" value="X-ray"/>
    <property type="resolution" value="1.80 A"/>
    <property type="chains" value="A=1-378"/>
</dbReference>
<dbReference type="PDB" id="6SQ3">
    <property type="method" value="X-ray"/>
    <property type="resolution" value="2.15 A"/>
    <property type="chains" value="A/B=1-378"/>
</dbReference>
<dbReference type="PDB" id="6SQ4">
    <property type="method" value="X-ray"/>
    <property type="resolution" value="1.70 A"/>
    <property type="chains" value="A/B=1-378"/>
</dbReference>
<dbReference type="PDB" id="6SQH">
    <property type="method" value="X-ray"/>
    <property type="resolution" value="2.39 A"/>
    <property type="chains" value="A/B=1-378"/>
</dbReference>
<dbReference type="PDB" id="6SQI">
    <property type="method" value="X-ray"/>
    <property type="resolution" value="1.60 A"/>
    <property type="chains" value="A=1-378"/>
</dbReference>
<dbReference type="PDB" id="6SQK">
    <property type="method" value="X-ray"/>
    <property type="resolution" value="1.40 A"/>
    <property type="chains" value="A/B=1-378"/>
</dbReference>
<dbReference type="PDB" id="7NUD">
    <property type="method" value="X-ray"/>
    <property type="resolution" value="1.65 A"/>
    <property type="chains" value="A/B=1-378"/>
</dbReference>
<dbReference type="PDB" id="7NUE">
    <property type="method" value="X-ray"/>
    <property type="resolution" value="2.00 A"/>
    <property type="chains" value="A/B=1-378"/>
</dbReference>
<dbReference type="PDB" id="7P2R">
    <property type="method" value="X-ray"/>
    <property type="resolution" value="2.30 A"/>
    <property type="chains" value="A/B=34-378"/>
</dbReference>
<dbReference type="PDBsum" id="4C03"/>
<dbReference type="PDBsum" id="4C04"/>
<dbReference type="PDBsum" id="4C05"/>
<dbReference type="PDBsum" id="4C06"/>
<dbReference type="PDBsum" id="4C07"/>
<dbReference type="PDBsum" id="4C08"/>
<dbReference type="PDBsum" id="5FQN"/>
<dbReference type="PDBsum" id="5FQO"/>
<dbReference type="PDBsum" id="5LV4"/>
<dbReference type="PDBsum" id="5LV5"/>
<dbReference type="PDBsum" id="6SQ3"/>
<dbReference type="PDBsum" id="6SQ4"/>
<dbReference type="PDBsum" id="6SQH"/>
<dbReference type="PDBsum" id="6SQI"/>
<dbReference type="PDBsum" id="6SQK"/>
<dbReference type="PDBsum" id="7NUD"/>
<dbReference type="PDBsum" id="7NUE"/>
<dbReference type="PDBsum" id="7P2R"/>
<dbReference type="SMR" id="Q6NZB1"/>
<dbReference type="BioGRID" id="221340">
    <property type="interactions" value="8"/>
</dbReference>
<dbReference type="FunCoup" id="Q6NZB1">
    <property type="interactions" value="3335"/>
</dbReference>
<dbReference type="IntAct" id="Q6NZB1">
    <property type="interactions" value="6"/>
</dbReference>
<dbReference type="STRING" id="10090.ENSMUSP00000140836"/>
<dbReference type="PhosphoSitePlus" id="Q6NZB1"/>
<dbReference type="SwissPalm" id="Q6NZB1"/>
<dbReference type="PaxDb" id="10090-ENSMUSP00000102177"/>
<dbReference type="PeptideAtlas" id="Q6NZB1"/>
<dbReference type="ProteomicsDB" id="296207"/>
<dbReference type="Pumba" id="Q6NZB1"/>
<dbReference type="Antibodypedia" id="21010">
    <property type="antibodies" value="434 antibodies from 41 providers"/>
</dbReference>
<dbReference type="DNASU" id="99890"/>
<dbReference type="Ensembl" id="ENSMUST00000106567.2">
    <property type="protein sequence ID" value="ENSMUSP00000102177.2"/>
    <property type="gene ID" value="ENSMUSG00000049300.12"/>
</dbReference>
<dbReference type="Ensembl" id="ENSMUST00000168412.3">
    <property type="protein sequence ID" value="ENSMUSP00000129801.2"/>
    <property type="gene ID" value="ENSMUSG00000049300.12"/>
</dbReference>
<dbReference type="Ensembl" id="ENSMUST00000190378.2">
    <property type="protein sequence ID" value="ENSMUSP00000140836.2"/>
    <property type="gene ID" value="ENSMUSG00000049300.12"/>
</dbReference>
<dbReference type="GeneID" id="99890"/>
<dbReference type="KEGG" id="mmu:99890"/>
<dbReference type="UCSC" id="uc008rau.2">
    <property type="organism name" value="mouse"/>
</dbReference>
<dbReference type="AGR" id="MGI:2139971"/>
<dbReference type="CTD" id="55170"/>
<dbReference type="MGI" id="MGI:2139971">
    <property type="gene designation" value="Prmt6"/>
</dbReference>
<dbReference type="VEuPathDB" id="HostDB:ENSMUSG00000049300"/>
<dbReference type="eggNOG" id="KOG1499">
    <property type="taxonomic scope" value="Eukaryota"/>
</dbReference>
<dbReference type="GeneTree" id="ENSGT00940000160961"/>
<dbReference type="HOGENOM" id="CLU_017375_1_2_1"/>
<dbReference type="InParanoid" id="Q6NZB1"/>
<dbReference type="OMA" id="CIHVDYT"/>
<dbReference type="OrthoDB" id="7848332at2759"/>
<dbReference type="PhylomeDB" id="Q6NZB1"/>
<dbReference type="TreeFam" id="TF328817"/>
<dbReference type="BRENDA" id="2.1.1.319">
    <property type="organism ID" value="3474"/>
</dbReference>
<dbReference type="Reactome" id="R-MMU-3214858">
    <property type="pathway name" value="RMTs methylate histone arginines"/>
</dbReference>
<dbReference type="Reactome" id="R-MMU-8936459">
    <property type="pathway name" value="RUNX1 regulates genes involved in megakaryocyte differentiation and platelet function"/>
</dbReference>
<dbReference type="BioGRID-ORCS" id="99890">
    <property type="hits" value="3 hits in 120 CRISPR screens"/>
</dbReference>
<dbReference type="EvolutionaryTrace" id="Q6NZB1"/>
<dbReference type="PRO" id="PR:Q6NZB1"/>
<dbReference type="Proteomes" id="UP000000589">
    <property type="component" value="Chromosome 3"/>
</dbReference>
<dbReference type="RNAct" id="Q6NZB1">
    <property type="molecule type" value="protein"/>
</dbReference>
<dbReference type="Bgee" id="ENSMUSG00000049300">
    <property type="expression patterns" value="Expressed in metanephric cortical collecting duct and 189 other cell types or tissues"/>
</dbReference>
<dbReference type="GO" id="GO:0005730">
    <property type="term" value="C:nucleolus"/>
    <property type="evidence" value="ECO:0007669"/>
    <property type="project" value="Ensembl"/>
</dbReference>
<dbReference type="GO" id="GO:0005654">
    <property type="term" value="C:nucleoplasm"/>
    <property type="evidence" value="ECO:0007669"/>
    <property type="project" value="Ensembl"/>
</dbReference>
<dbReference type="GO" id="GO:0005634">
    <property type="term" value="C:nucleus"/>
    <property type="evidence" value="ECO:0000250"/>
    <property type="project" value="UniProtKB"/>
</dbReference>
<dbReference type="GO" id="GO:0003682">
    <property type="term" value="F:chromatin binding"/>
    <property type="evidence" value="ECO:0000314"/>
    <property type="project" value="MGI"/>
</dbReference>
<dbReference type="GO" id="GO:0008469">
    <property type="term" value="F:histone arginine N-methyltransferase activity"/>
    <property type="evidence" value="ECO:0007669"/>
    <property type="project" value="Ensembl"/>
</dbReference>
<dbReference type="GO" id="GO:0042393">
    <property type="term" value="F:histone binding"/>
    <property type="evidence" value="ECO:0000250"/>
    <property type="project" value="UniProtKB"/>
</dbReference>
<dbReference type="GO" id="GO:0070612">
    <property type="term" value="F:histone H2AR3 methyltransferase activity"/>
    <property type="evidence" value="ECO:0000250"/>
    <property type="project" value="UniProtKB"/>
</dbReference>
<dbReference type="GO" id="GO:0070611">
    <property type="term" value="F:histone H3R2 methyltransferase activity"/>
    <property type="evidence" value="ECO:0000315"/>
    <property type="project" value="MGI"/>
</dbReference>
<dbReference type="GO" id="GO:0044020">
    <property type="term" value="F:histone H4R3 methyltransferase activity"/>
    <property type="evidence" value="ECO:0000250"/>
    <property type="project" value="UniProtKB"/>
</dbReference>
<dbReference type="GO" id="GO:0042054">
    <property type="term" value="F:histone methyltransferase activity"/>
    <property type="evidence" value="ECO:0000250"/>
    <property type="project" value="UniProtKB"/>
</dbReference>
<dbReference type="GO" id="GO:0016274">
    <property type="term" value="F:protein-arginine N-methyltransferase activity"/>
    <property type="evidence" value="ECO:0000314"/>
    <property type="project" value="UniProtKB"/>
</dbReference>
<dbReference type="GO" id="GO:0035242">
    <property type="term" value="F:protein-arginine omega-N asymmetric methyltransferase activity"/>
    <property type="evidence" value="ECO:0000250"/>
    <property type="project" value="UniProtKB"/>
</dbReference>
<dbReference type="GO" id="GO:0035241">
    <property type="term" value="F:protein-arginine omega-N monomethyltransferase activity"/>
    <property type="evidence" value="ECO:0000250"/>
    <property type="project" value="UniProtKB"/>
</dbReference>
<dbReference type="GO" id="GO:0090398">
    <property type="term" value="P:cellular senescence"/>
    <property type="evidence" value="ECO:0000315"/>
    <property type="project" value="MGI"/>
</dbReference>
<dbReference type="GO" id="GO:0006281">
    <property type="term" value="P:DNA repair"/>
    <property type="evidence" value="ECO:0007669"/>
    <property type="project" value="UniProtKB-KW"/>
</dbReference>
<dbReference type="GO" id="GO:0032259">
    <property type="term" value="P:methylation"/>
    <property type="evidence" value="ECO:0007669"/>
    <property type="project" value="UniProtKB-KW"/>
</dbReference>
<dbReference type="GO" id="GO:0045892">
    <property type="term" value="P:negative regulation of DNA-templated transcription"/>
    <property type="evidence" value="ECO:0000250"/>
    <property type="project" value="UniProtKB"/>
</dbReference>
<dbReference type="GO" id="GO:0000122">
    <property type="term" value="P:negative regulation of transcription by RNA polymerase II"/>
    <property type="evidence" value="ECO:0000315"/>
    <property type="project" value="MGI"/>
</dbReference>
<dbReference type="GO" id="GO:2000059">
    <property type="term" value="P:negative regulation of ubiquitin-dependent protein catabolic process"/>
    <property type="evidence" value="ECO:0000314"/>
    <property type="project" value="UniProtKB"/>
</dbReference>
<dbReference type="GO" id="GO:0036211">
    <property type="term" value="P:protein modification process"/>
    <property type="evidence" value="ECO:0007669"/>
    <property type="project" value="Ensembl"/>
</dbReference>
<dbReference type="GO" id="GO:0010821">
    <property type="term" value="P:regulation of mitochondrion organization"/>
    <property type="evidence" value="ECO:0000250"/>
    <property type="project" value="UniProtKB"/>
</dbReference>
<dbReference type="GO" id="GO:1901796">
    <property type="term" value="P:regulation of signal transduction by p53 class mediator"/>
    <property type="evidence" value="ECO:0000315"/>
    <property type="project" value="MGI"/>
</dbReference>
<dbReference type="CDD" id="cd02440">
    <property type="entry name" value="AdoMet_MTases"/>
    <property type="match status" value="1"/>
</dbReference>
<dbReference type="FunFam" id="3.40.50.150:FF:000016">
    <property type="entry name" value="Protein arginine N-methyltransferase 6"/>
    <property type="match status" value="1"/>
</dbReference>
<dbReference type="FunFam" id="2.70.160.11:FF:000009">
    <property type="entry name" value="protein arginine N-methyltransferase 6"/>
    <property type="match status" value="1"/>
</dbReference>
<dbReference type="Gene3D" id="2.70.160.11">
    <property type="entry name" value="Hnrnp arginine n-methyltransferase1"/>
    <property type="match status" value="1"/>
</dbReference>
<dbReference type="Gene3D" id="3.40.50.150">
    <property type="entry name" value="Vaccinia Virus protein VP39"/>
    <property type="match status" value="1"/>
</dbReference>
<dbReference type="InterPro" id="IPR025799">
    <property type="entry name" value="Arg_MeTrfase"/>
</dbReference>
<dbReference type="InterPro" id="IPR041698">
    <property type="entry name" value="Methyltransf_25"/>
</dbReference>
<dbReference type="InterPro" id="IPR055135">
    <property type="entry name" value="PRMT_dom"/>
</dbReference>
<dbReference type="InterPro" id="IPR029063">
    <property type="entry name" value="SAM-dependent_MTases_sf"/>
</dbReference>
<dbReference type="PANTHER" id="PTHR11006">
    <property type="entry name" value="PROTEIN ARGININE N-METHYLTRANSFERASE"/>
    <property type="match status" value="1"/>
</dbReference>
<dbReference type="PANTHER" id="PTHR11006:SF73">
    <property type="entry name" value="PROTEIN ARGININE N-METHYLTRANSFERASE 6"/>
    <property type="match status" value="1"/>
</dbReference>
<dbReference type="Pfam" id="PF13649">
    <property type="entry name" value="Methyltransf_25"/>
    <property type="match status" value="1"/>
</dbReference>
<dbReference type="Pfam" id="PF22528">
    <property type="entry name" value="PRMT_C"/>
    <property type="match status" value="1"/>
</dbReference>
<dbReference type="SUPFAM" id="SSF53335">
    <property type="entry name" value="S-adenosyl-L-methionine-dependent methyltransferases"/>
    <property type="match status" value="1"/>
</dbReference>
<dbReference type="PROSITE" id="PS51678">
    <property type="entry name" value="SAM_MT_PRMT"/>
    <property type="match status" value="1"/>
</dbReference>
<keyword id="KW-0002">3D-structure</keyword>
<keyword id="KW-0156">Chromatin regulator</keyword>
<keyword id="KW-0227">DNA damage</keyword>
<keyword id="KW-0234">DNA repair</keyword>
<keyword id="KW-0488">Methylation</keyword>
<keyword id="KW-0489">Methyltransferase</keyword>
<keyword id="KW-0539">Nucleus</keyword>
<keyword id="KW-1185">Reference proteome</keyword>
<keyword id="KW-0678">Repressor</keyword>
<keyword id="KW-0949">S-adenosyl-L-methionine</keyword>
<keyword id="KW-0804">Transcription</keyword>
<keyword id="KW-0805">Transcription regulation</keyword>
<keyword id="KW-0808">Transferase</keyword>
<organism>
    <name type="scientific">Mus musculus</name>
    <name type="common">Mouse</name>
    <dbReference type="NCBI Taxonomy" id="10090"/>
    <lineage>
        <taxon>Eukaryota</taxon>
        <taxon>Metazoa</taxon>
        <taxon>Chordata</taxon>
        <taxon>Craniata</taxon>
        <taxon>Vertebrata</taxon>
        <taxon>Euteleostomi</taxon>
        <taxon>Mammalia</taxon>
        <taxon>Eutheria</taxon>
        <taxon>Euarchontoglires</taxon>
        <taxon>Glires</taxon>
        <taxon>Rodentia</taxon>
        <taxon>Myomorpha</taxon>
        <taxon>Muroidea</taxon>
        <taxon>Muridae</taxon>
        <taxon>Murinae</taxon>
        <taxon>Mus</taxon>
        <taxon>Mus</taxon>
    </lineage>
</organism>
<reference key="1">
    <citation type="journal article" date="2005" name="Science">
        <title>The transcriptional landscape of the mammalian genome.</title>
        <authorList>
            <person name="Carninci P."/>
            <person name="Kasukawa T."/>
            <person name="Katayama S."/>
            <person name="Gough J."/>
            <person name="Frith M.C."/>
            <person name="Maeda N."/>
            <person name="Oyama R."/>
            <person name="Ravasi T."/>
            <person name="Lenhard B."/>
            <person name="Wells C."/>
            <person name="Kodzius R."/>
            <person name="Shimokawa K."/>
            <person name="Bajic V.B."/>
            <person name="Brenner S.E."/>
            <person name="Batalov S."/>
            <person name="Forrest A.R."/>
            <person name="Zavolan M."/>
            <person name="Davis M.J."/>
            <person name="Wilming L.G."/>
            <person name="Aidinis V."/>
            <person name="Allen J.E."/>
            <person name="Ambesi-Impiombato A."/>
            <person name="Apweiler R."/>
            <person name="Aturaliya R.N."/>
            <person name="Bailey T.L."/>
            <person name="Bansal M."/>
            <person name="Baxter L."/>
            <person name="Beisel K.W."/>
            <person name="Bersano T."/>
            <person name="Bono H."/>
            <person name="Chalk A.M."/>
            <person name="Chiu K.P."/>
            <person name="Choudhary V."/>
            <person name="Christoffels A."/>
            <person name="Clutterbuck D.R."/>
            <person name="Crowe M.L."/>
            <person name="Dalla E."/>
            <person name="Dalrymple B.P."/>
            <person name="de Bono B."/>
            <person name="Della Gatta G."/>
            <person name="di Bernardo D."/>
            <person name="Down T."/>
            <person name="Engstrom P."/>
            <person name="Fagiolini M."/>
            <person name="Faulkner G."/>
            <person name="Fletcher C.F."/>
            <person name="Fukushima T."/>
            <person name="Furuno M."/>
            <person name="Futaki S."/>
            <person name="Gariboldi M."/>
            <person name="Georgii-Hemming P."/>
            <person name="Gingeras T.R."/>
            <person name="Gojobori T."/>
            <person name="Green R.E."/>
            <person name="Gustincich S."/>
            <person name="Harbers M."/>
            <person name="Hayashi Y."/>
            <person name="Hensch T.K."/>
            <person name="Hirokawa N."/>
            <person name="Hill D."/>
            <person name="Huminiecki L."/>
            <person name="Iacono M."/>
            <person name="Ikeo K."/>
            <person name="Iwama A."/>
            <person name="Ishikawa T."/>
            <person name="Jakt M."/>
            <person name="Kanapin A."/>
            <person name="Katoh M."/>
            <person name="Kawasawa Y."/>
            <person name="Kelso J."/>
            <person name="Kitamura H."/>
            <person name="Kitano H."/>
            <person name="Kollias G."/>
            <person name="Krishnan S.P."/>
            <person name="Kruger A."/>
            <person name="Kummerfeld S.K."/>
            <person name="Kurochkin I.V."/>
            <person name="Lareau L.F."/>
            <person name="Lazarevic D."/>
            <person name="Lipovich L."/>
            <person name="Liu J."/>
            <person name="Liuni S."/>
            <person name="McWilliam S."/>
            <person name="Madan Babu M."/>
            <person name="Madera M."/>
            <person name="Marchionni L."/>
            <person name="Matsuda H."/>
            <person name="Matsuzawa S."/>
            <person name="Miki H."/>
            <person name="Mignone F."/>
            <person name="Miyake S."/>
            <person name="Morris K."/>
            <person name="Mottagui-Tabar S."/>
            <person name="Mulder N."/>
            <person name="Nakano N."/>
            <person name="Nakauchi H."/>
            <person name="Ng P."/>
            <person name="Nilsson R."/>
            <person name="Nishiguchi S."/>
            <person name="Nishikawa S."/>
            <person name="Nori F."/>
            <person name="Ohara O."/>
            <person name="Okazaki Y."/>
            <person name="Orlando V."/>
            <person name="Pang K.C."/>
            <person name="Pavan W.J."/>
            <person name="Pavesi G."/>
            <person name="Pesole G."/>
            <person name="Petrovsky N."/>
            <person name="Piazza S."/>
            <person name="Reed J."/>
            <person name="Reid J.F."/>
            <person name="Ring B.Z."/>
            <person name="Ringwald M."/>
            <person name="Rost B."/>
            <person name="Ruan Y."/>
            <person name="Salzberg S.L."/>
            <person name="Sandelin A."/>
            <person name="Schneider C."/>
            <person name="Schoenbach C."/>
            <person name="Sekiguchi K."/>
            <person name="Semple C.A."/>
            <person name="Seno S."/>
            <person name="Sessa L."/>
            <person name="Sheng Y."/>
            <person name="Shibata Y."/>
            <person name="Shimada H."/>
            <person name="Shimada K."/>
            <person name="Silva D."/>
            <person name="Sinclair B."/>
            <person name="Sperling S."/>
            <person name="Stupka E."/>
            <person name="Sugiura K."/>
            <person name="Sultana R."/>
            <person name="Takenaka Y."/>
            <person name="Taki K."/>
            <person name="Tammoja K."/>
            <person name="Tan S.L."/>
            <person name="Tang S."/>
            <person name="Taylor M.S."/>
            <person name="Tegner J."/>
            <person name="Teichmann S.A."/>
            <person name="Ueda H.R."/>
            <person name="van Nimwegen E."/>
            <person name="Verardo R."/>
            <person name="Wei C.L."/>
            <person name="Yagi K."/>
            <person name="Yamanishi H."/>
            <person name="Zabarovsky E."/>
            <person name="Zhu S."/>
            <person name="Zimmer A."/>
            <person name="Hide W."/>
            <person name="Bult C."/>
            <person name="Grimmond S.M."/>
            <person name="Teasdale R.D."/>
            <person name="Liu E.T."/>
            <person name="Brusic V."/>
            <person name="Quackenbush J."/>
            <person name="Wahlestedt C."/>
            <person name="Mattick J.S."/>
            <person name="Hume D.A."/>
            <person name="Kai C."/>
            <person name="Sasaki D."/>
            <person name="Tomaru Y."/>
            <person name="Fukuda S."/>
            <person name="Kanamori-Katayama M."/>
            <person name="Suzuki M."/>
            <person name="Aoki J."/>
            <person name="Arakawa T."/>
            <person name="Iida J."/>
            <person name="Imamura K."/>
            <person name="Itoh M."/>
            <person name="Kato T."/>
            <person name="Kawaji H."/>
            <person name="Kawagashira N."/>
            <person name="Kawashima T."/>
            <person name="Kojima M."/>
            <person name="Kondo S."/>
            <person name="Konno H."/>
            <person name="Nakano K."/>
            <person name="Ninomiya N."/>
            <person name="Nishio T."/>
            <person name="Okada M."/>
            <person name="Plessy C."/>
            <person name="Shibata K."/>
            <person name="Shiraki T."/>
            <person name="Suzuki S."/>
            <person name="Tagami M."/>
            <person name="Waki K."/>
            <person name="Watahiki A."/>
            <person name="Okamura-Oho Y."/>
            <person name="Suzuki H."/>
            <person name="Kawai J."/>
            <person name="Hayashizaki Y."/>
        </authorList>
    </citation>
    <scope>NUCLEOTIDE SEQUENCE [LARGE SCALE MRNA]</scope>
    <source>
        <strain>C57BL/6J</strain>
        <strain>NOD</strain>
        <tissue>Embryo</tissue>
        <tissue>Spleen</tissue>
    </source>
</reference>
<reference key="2">
    <citation type="journal article" date="2004" name="Genome Res.">
        <title>The status, quality, and expansion of the NIH full-length cDNA project: the Mammalian Gene Collection (MGC).</title>
        <authorList>
            <consortium name="The MGC Project Team"/>
        </authorList>
    </citation>
    <scope>NUCLEOTIDE SEQUENCE [LARGE SCALE MRNA]</scope>
    <source>
        <strain>Czech II</strain>
        <tissue>Embryo</tissue>
        <tissue>Mammary tumor</tissue>
    </source>
</reference>
<reference key="3">
    <citation type="journal article" date="2012" name="Nucleic Acids Res.">
        <title>Ablation of PRMT6 reveals a role as a negative transcriptional regulator of the p53 tumor suppressor.</title>
        <authorList>
            <person name="Neault M."/>
            <person name="Mallette F.A."/>
            <person name="Vogel G."/>
            <person name="Michaud-Levesque J."/>
            <person name="Richard S."/>
        </authorList>
    </citation>
    <scope>FUNCTION</scope>
    <scope>DISRUPTION PHENOTYPE</scope>
</reference>
<reference key="4">
    <citation type="journal article" date="2014" name="Sci. Signal.">
        <title>Arginine methylation of CRTC2 is critical in the transcriptional control of hepatic glucose metabolism.</title>
        <authorList>
            <person name="Han H.S."/>
            <person name="Jung C.Y."/>
            <person name="Yoon Y.S."/>
            <person name="Choi S."/>
            <person name="Choi D."/>
            <person name="Kang G."/>
            <person name="Park K.G."/>
            <person name="Kim S.T."/>
            <person name="Koo S.H."/>
        </authorList>
    </citation>
    <scope>FUNCTION</scope>
    <scope>DISRUPTION PHENOTYPE</scope>
</reference>
<reference key="5">
    <citation type="journal article" date="2015" name="J. Biol. Chem.">
        <title>Exchange factor TBL1 and arginine methyltransferase PRMT6 cooperate in protecting G protein pathway suppressor 2 (GPS2) from proteasomal degradation.</title>
        <authorList>
            <person name="Huang J."/>
            <person name="Cardamone M.D."/>
            <person name="Johnson H.E."/>
            <person name="Neault M."/>
            <person name="Chan M."/>
            <person name="Floyd Z.E."/>
            <person name="Mallette F.A."/>
            <person name="Perissi V."/>
        </authorList>
    </citation>
    <scope>FUNCTION</scope>
    <scope>CATALYTIC ACTIVITY</scope>
</reference>
<evidence type="ECO:0000250" key="1"/>
<evidence type="ECO:0000250" key="2">
    <source>
        <dbReference type="UniProtKB" id="Q96LA8"/>
    </source>
</evidence>
<evidence type="ECO:0000255" key="3">
    <source>
        <dbReference type="PROSITE-ProRule" id="PRU01015"/>
    </source>
</evidence>
<evidence type="ECO:0000256" key="4">
    <source>
        <dbReference type="SAM" id="MobiDB-lite"/>
    </source>
</evidence>
<evidence type="ECO:0000269" key="5">
    <source>
    </source>
</evidence>
<evidence type="ECO:0000269" key="6">
    <source>
    </source>
</evidence>
<evidence type="ECO:0000269" key="7">
    <source>
    </source>
</evidence>
<evidence type="ECO:0000305" key="8"/>
<evidence type="ECO:0007829" key="9">
    <source>
        <dbReference type="PDB" id="4C08"/>
    </source>
</evidence>
<evidence type="ECO:0007829" key="10">
    <source>
        <dbReference type="PDB" id="6SQK"/>
    </source>
</evidence>
<comment type="function">
    <text evidence="2 5 6 7">Arginine methyltransferase that can catalyze the formation of both omega-N monomethylarginine (MMA) and asymmetrical dimethylarginine (aDMA), with a strong preference for the formation of aDMA (PubMed:22904064, PubMed:26070566). Preferentially methylates arginyl residues present in a glycine and arginine-rich domain and displays preference for monomethylated substrates (By similarity). Specifically mediates the asymmetric dimethylation of histone H3 'Arg-2' to form H3R2me2a (By similarity). H3R2me2a represents a specific tag for epigenetic transcriptional repression and is mutually exclusive with methylation on histone H3 'Lys-4' (H3K4me2 and H3K4me3) (By similarity). Acts as a transcriptional repressor of various genes such as HOXA2, THBS1 and TP53 (PubMed:22904064). Repression of TP53 blocks cellular senescence (PubMed:22904064). Also methylates histone H2A and H4 'Arg-3' (H2AR3me and H4R3me, respectively) (By similarity). Acts as a regulator of DNA base excision during DNA repair by mediating the methylation of DNA polymerase beta (POLB), leading to the stimulation of its polymerase activity by enhancing DNA binding and processivity (By similarity). Methylates HMGA1 (By similarity). Regulates alternative splicing events (By similarity). Acts as a transcriptional coactivator of a number of steroid hormone receptors including ESR1, ESR2, PGR and NR3C1 (By similarity). Promotes fasting-induced transcriptional activation of the gluconeogenic program through methylation of the CRTC2 transcription coactivator (PubMed:24570487). Methylates GPS2, protecting GPS2 from ubiquitination and degradation (PubMed:26070566). Methylates SIRT7, inhibiting SIRT7 histone deacetylase activity and promoting mitochondria biogenesis (By similarity).</text>
</comment>
<comment type="catalytic activity">
    <reaction evidence="7">
        <text>L-arginyl-[protein] + 2 S-adenosyl-L-methionine = N(omega),N(omega)-dimethyl-L-arginyl-[protein] + 2 S-adenosyl-L-homocysteine + 2 H(+)</text>
        <dbReference type="Rhea" id="RHEA:48096"/>
        <dbReference type="Rhea" id="RHEA-COMP:10532"/>
        <dbReference type="Rhea" id="RHEA-COMP:11991"/>
        <dbReference type="ChEBI" id="CHEBI:15378"/>
        <dbReference type="ChEBI" id="CHEBI:29965"/>
        <dbReference type="ChEBI" id="CHEBI:57856"/>
        <dbReference type="ChEBI" id="CHEBI:59789"/>
        <dbReference type="ChEBI" id="CHEBI:61897"/>
        <dbReference type="EC" id="2.1.1.319"/>
    </reaction>
</comment>
<comment type="subunit">
    <text evidence="2">Interacts with (and methylates) HIV-1 Tat, Rev and Nucleocapsid protein p7 (NC). Interacts with EPB41L3 and NCOA1.</text>
</comment>
<comment type="subcellular location">
    <subcellularLocation>
        <location evidence="2">Nucleus</location>
    </subcellularLocation>
</comment>
<comment type="PTM">
    <text evidence="1">Automethylation enhances its stability.</text>
</comment>
<comment type="disruption phenotype">
    <text evidence="5 6">Embryonic fibroblasts from mutant mice display growth defects, premature senescence and increased levels of TP53 and multiple TP53 targets. In liver, knockdown disrupts the formation of a cAMP-mediated transcription complex involving CRTC2, reduces the expression of genes encoding gluconeogenic factors and decreases glucose output in primary hepatocytes, it also restores euglycemia in insulin-resistant mice.</text>
</comment>
<comment type="similarity">
    <text evidence="3">Belongs to the class I-like SAM-binding methyltransferase superfamily. Protein arginine N-methyltransferase family. PRMT6 subfamily.</text>
</comment>
<comment type="sequence caution" evidence="8">
    <conflict type="erroneous initiation">
        <sequence resource="EMBL-CDS" id="BAC28811"/>
    </conflict>
    <text>Truncated N-terminus.</text>
</comment>
<comment type="sequence caution" evidence="8">
    <conflict type="erroneous initiation">
        <sequence resource="EMBL-CDS" id="BAC39923"/>
    </conflict>
    <text>Truncated N-terminus.</text>
</comment>
<sequence length="378" mass="41866">MSLSKKRKLESGDSGGAGAGGEGAEEENGGEQEAAPPRPRRTKSERDQLYYECYSDVSVHEEMIADQVRTEAYRLGILKNWAALRGKTVLDVGAGTGILSIFCAQAGARRVYAVEASAIWQQAREVVRLNGLEDRVHVLPGPVETVELPERVDAIVSEWMGYGLLHESMLSSVLHARTKWLKEGGLLLPASAELFVAPISDQMLEWRLGFWSQVKQHYGVDMSCMESFATRCLMGHSEIVVQDLSGEDVLARPQRFAQLELARAGLEQELEAGVGGRFRCSCYGSAPLHGFAVWFQVTFPGGDSEKPLVLSTSPFHPATHWKQALLYLNEPVPVEQDTDISGEITLLPSPDNPRRLRILLRYKVGDHEEKTKDFAMED</sequence>
<name>ANM6_MOUSE</name>
<proteinExistence type="evidence at protein level"/>